<organism>
    <name type="scientific">Saccharomyces cerevisiae (strain ATCC 204508 / S288c)</name>
    <name type="common">Baker's yeast</name>
    <dbReference type="NCBI Taxonomy" id="559292"/>
    <lineage>
        <taxon>Eukaryota</taxon>
        <taxon>Fungi</taxon>
        <taxon>Dikarya</taxon>
        <taxon>Ascomycota</taxon>
        <taxon>Saccharomycotina</taxon>
        <taxon>Saccharomycetes</taxon>
        <taxon>Saccharomycetales</taxon>
        <taxon>Saccharomycetaceae</taxon>
        <taxon>Saccharomyces</taxon>
    </lineage>
</organism>
<protein>
    <recommendedName>
        <fullName>Periodic tryptophan protein 1</fullName>
    </recommendedName>
</protein>
<evidence type="ECO:0000256" key="1">
    <source>
        <dbReference type="SAM" id="MobiDB-lite"/>
    </source>
</evidence>
<evidence type="ECO:0000269" key="2">
    <source>
    </source>
</evidence>
<evidence type="ECO:0000305" key="3"/>
<evidence type="ECO:0007744" key="4">
    <source>
    </source>
</evidence>
<evidence type="ECO:0007744" key="5">
    <source>
    </source>
</evidence>
<evidence type="ECO:0007744" key="6">
    <source>
    </source>
</evidence>
<evidence type="ECO:0007744" key="7">
    <source>
    </source>
</evidence>
<accession>P21304</accession>
<accession>D6VYJ9</accession>
<feature type="chain" id="PRO_0000051173" description="Periodic tryptophan protein 1">
    <location>
        <begin position="1"/>
        <end position="576"/>
    </location>
</feature>
<feature type="repeat" description="WD 1">
    <location>
        <begin position="207"/>
        <end position="252"/>
    </location>
</feature>
<feature type="repeat" description="WD 2">
    <location>
        <begin position="284"/>
        <end position="324"/>
    </location>
</feature>
<feature type="repeat" description="WD 3">
    <location>
        <begin position="329"/>
        <end position="369"/>
    </location>
</feature>
<feature type="repeat" description="WD 4">
    <location>
        <begin position="376"/>
        <end position="414"/>
    </location>
</feature>
<feature type="repeat" description="WD 5">
    <location>
        <begin position="420"/>
        <end position="461"/>
    </location>
</feature>
<feature type="repeat" description="WD 6">
    <location>
        <begin position="472"/>
        <end position="514"/>
    </location>
</feature>
<feature type="region of interest" description="Disordered" evidence="1">
    <location>
        <begin position="41"/>
        <end position="134"/>
    </location>
</feature>
<feature type="region of interest" description="Disordered" evidence="1">
    <location>
        <begin position="530"/>
        <end position="576"/>
    </location>
</feature>
<feature type="compositionally biased region" description="Acidic residues" evidence="1">
    <location>
        <begin position="46"/>
        <end position="58"/>
    </location>
</feature>
<feature type="compositionally biased region" description="Acidic residues" evidence="1">
    <location>
        <begin position="71"/>
        <end position="91"/>
    </location>
</feature>
<feature type="compositionally biased region" description="Basic and acidic residues" evidence="1">
    <location>
        <begin position="108"/>
        <end position="120"/>
    </location>
</feature>
<feature type="compositionally biased region" description="Acidic residues" evidence="1">
    <location>
        <begin position="558"/>
        <end position="576"/>
    </location>
</feature>
<feature type="modified residue" description="Phosphoserine" evidence="4 5 6 7">
    <location>
        <position position="52"/>
    </location>
</feature>
<feature type="modified residue" description="Phosphoserine" evidence="6 7">
    <location>
        <position position="131"/>
    </location>
</feature>
<keyword id="KW-0597">Phosphoprotein</keyword>
<keyword id="KW-1185">Reference proteome</keyword>
<keyword id="KW-0677">Repeat</keyword>
<keyword id="KW-0853">WD repeat</keyword>
<reference key="1">
    <citation type="journal article" date="1992" name="Proteins">
        <title>Comparative analysis of the beta transducin family with identification of several new members including PWP1, a nonessential gene of Saccharomyces cerevisiae that is divergently transcribed from NMT1.</title>
        <authorList>
            <person name="Duronio R.J."/>
            <person name="Gordon J.I."/>
            <person name="Boguski M.S."/>
        </authorList>
    </citation>
    <scope>NUCLEOTIDE SEQUENCE [GENOMIC DNA]</scope>
    <source>
        <strain>ATCC 204511 / S288c / AB972</strain>
    </source>
</reference>
<reference key="2">
    <citation type="journal article" date="1997" name="Nature">
        <title>The nucleotide sequence of Saccharomyces cerevisiae chromosome XII.</title>
        <authorList>
            <person name="Johnston M."/>
            <person name="Hillier L.W."/>
            <person name="Riles L."/>
            <person name="Albermann K."/>
            <person name="Andre B."/>
            <person name="Ansorge W."/>
            <person name="Benes V."/>
            <person name="Brueckner M."/>
            <person name="Delius H."/>
            <person name="Dubois E."/>
            <person name="Duesterhoeft A."/>
            <person name="Entian K.-D."/>
            <person name="Floeth M."/>
            <person name="Goffeau A."/>
            <person name="Hebling U."/>
            <person name="Heumann K."/>
            <person name="Heuss-Neitzel D."/>
            <person name="Hilbert H."/>
            <person name="Hilger F."/>
            <person name="Kleine K."/>
            <person name="Koetter P."/>
            <person name="Louis E.J."/>
            <person name="Messenguy F."/>
            <person name="Mewes H.-W."/>
            <person name="Miosga T."/>
            <person name="Moestl D."/>
            <person name="Mueller-Auer S."/>
            <person name="Nentwich U."/>
            <person name="Obermaier B."/>
            <person name="Piravandi E."/>
            <person name="Pohl T.M."/>
            <person name="Portetelle D."/>
            <person name="Purnelle B."/>
            <person name="Rechmann S."/>
            <person name="Rieger M."/>
            <person name="Rinke M."/>
            <person name="Rose M."/>
            <person name="Scharfe M."/>
            <person name="Scherens B."/>
            <person name="Scholler P."/>
            <person name="Schwager C."/>
            <person name="Schwarz S."/>
            <person name="Underwood A.P."/>
            <person name="Urrestarazu L.A."/>
            <person name="Vandenbol M."/>
            <person name="Verhasselt P."/>
            <person name="Vierendeels F."/>
            <person name="Voet M."/>
            <person name="Volckaert G."/>
            <person name="Voss H."/>
            <person name="Wambutt R."/>
            <person name="Wedler E."/>
            <person name="Wedler H."/>
            <person name="Zimmermann F.K."/>
            <person name="Zollner A."/>
            <person name="Hani J."/>
            <person name="Hoheisel J.D."/>
        </authorList>
    </citation>
    <scope>NUCLEOTIDE SEQUENCE [LARGE SCALE GENOMIC DNA]</scope>
    <source>
        <strain>ATCC 204508 / S288c</strain>
    </source>
</reference>
<reference key="3">
    <citation type="journal article" date="2014" name="G3 (Bethesda)">
        <title>The reference genome sequence of Saccharomyces cerevisiae: Then and now.</title>
        <authorList>
            <person name="Engel S.R."/>
            <person name="Dietrich F.S."/>
            <person name="Fisk D.G."/>
            <person name="Binkley G."/>
            <person name="Balakrishnan R."/>
            <person name="Costanzo M.C."/>
            <person name="Dwight S.S."/>
            <person name="Hitz B.C."/>
            <person name="Karra K."/>
            <person name="Nash R.S."/>
            <person name="Weng S."/>
            <person name="Wong E.D."/>
            <person name="Lloyd P."/>
            <person name="Skrzypek M.S."/>
            <person name="Miyasato S.R."/>
            <person name="Simison M."/>
            <person name="Cherry J.M."/>
        </authorList>
    </citation>
    <scope>GENOME REANNOTATION</scope>
    <source>
        <strain>ATCC 204508 / S288c</strain>
    </source>
</reference>
<reference key="4">
    <citation type="journal article" date="2003" name="Nature">
        <title>Global analysis of protein expression in yeast.</title>
        <authorList>
            <person name="Ghaemmaghami S."/>
            <person name="Huh W.-K."/>
            <person name="Bower K."/>
            <person name="Howson R.W."/>
            <person name="Belle A."/>
            <person name="Dephoure N."/>
            <person name="O'Shea E.K."/>
            <person name="Weissman J.S."/>
        </authorList>
    </citation>
    <scope>LEVEL OF PROTEIN EXPRESSION [LARGE SCALE ANALYSIS]</scope>
</reference>
<reference key="5">
    <citation type="journal article" date="2005" name="Mol. Cell. Proteomics">
        <title>Quantitative phosphoproteomics applied to the yeast pheromone signaling pathway.</title>
        <authorList>
            <person name="Gruhler A."/>
            <person name="Olsen J.V."/>
            <person name="Mohammed S."/>
            <person name="Mortensen P."/>
            <person name="Faergeman N.J."/>
            <person name="Mann M."/>
            <person name="Jensen O.N."/>
        </authorList>
    </citation>
    <scope>PHOSPHORYLATION [LARGE SCALE ANALYSIS] AT SER-52</scope>
    <scope>IDENTIFICATION BY MASS SPECTROMETRY [LARGE SCALE ANALYSIS]</scope>
    <source>
        <strain>YAL6B</strain>
    </source>
</reference>
<reference key="6">
    <citation type="journal article" date="2007" name="J. Proteome Res.">
        <title>Large-scale phosphorylation analysis of alpha-factor-arrested Saccharomyces cerevisiae.</title>
        <authorList>
            <person name="Li X."/>
            <person name="Gerber S.A."/>
            <person name="Rudner A.D."/>
            <person name="Beausoleil S.A."/>
            <person name="Haas W."/>
            <person name="Villen J."/>
            <person name="Elias J.E."/>
            <person name="Gygi S.P."/>
        </authorList>
    </citation>
    <scope>PHOSPHORYLATION [LARGE SCALE ANALYSIS] AT SER-52</scope>
    <scope>IDENTIFICATION BY MASS SPECTROMETRY [LARGE SCALE ANALYSIS]</scope>
    <source>
        <strain>ADR376</strain>
    </source>
</reference>
<reference key="7">
    <citation type="journal article" date="2008" name="Mol. Cell. Proteomics">
        <title>A multidimensional chromatography technology for in-depth phosphoproteome analysis.</title>
        <authorList>
            <person name="Albuquerque C.P."/>
            <person name="Smolka M.B."/>
            <person name="Payne S.H."/>
            <person name="Bafna V."/>
            <person name="Eng J."/>
            <person name="Zhou H."/>
        </authorList>
    </citation>
    <scope>PHOSPHORYLATION [LARGE SCALE ANALYSIS] AT SER-52 AND SER-131</scope>
    <scope>IDENTIFICATION BY MASS SPECTROMETRY [LARGE SCALE ANALYSIS]</scope>
</reference>
<reference key="8">
    <citation type="journal article" date="2009" name="Science">
        <title>Global analysis of Cdk1 substrate phosphorylation sites provides insights into evolution.</title>
        <authorList>
            <person name="Holt L.J."/>
            <person name="Tuch B.B."/>
            <person name="Villen J."/>
            <person name="Johnson A.D."/>
            <person name="Gygi S.P."/>
            <person name="Morgan D.O."/>
        </authorList>
    </citation>
    <scope>PHOSPHORYLATION [LARGE SCALE ANALYSIS] AT SER-52 AND SER-131</scope>
    <scope>IDENTIFICATION BY MASS SPECTROMETRY [LARGE SCALE ANALYSIS]</scope>
</reference>
<proteinExistence type="evidence at protein level"/>
<comment type="interaction">
    <interactant intactId="EBI-14328">
        <id>P21304</id>
    </interactant>
    <interactant intactId="EBI-3775">
        <id>Q08235</id>
        <label>BRX1</label>
    </interactant>
    <organismsDiffer>false</organismsDiffer>
    <experiments>4</experiments>
</comment>
<comment type="miscellaneous">
    <text evidence="2">Present with 43800 molecules/cell in log phase SD medium.</text>
</comment>
<comment type="similarity">
    <text evidence="3">Belongs to the WD repeat PWP1 family.</text>
</comment>
<sequence length="576" mass="63803">MISATNWVPRGFSSEFPEKYVLDDEEVERINQLAQLNLDDAKATLEEAEGESGVEDDAATGSSNKLKDQLDIDDDLKEYNLEEYDDEEIADNEGGKDVSMFPGLSNDSDVKFHEGEKGEDPYISLPNQEDSQEEKQELQVYPSDNLVLAARTEDDVSYLDIYVYDDGAGFHSSDIPVEEGDEADPDVARGLVRDPALYVHHDLMLPAFPLCVEWLDYKVGSNSEEAANYAAIGTFDPQIEIWNLDCVDKAFPDMILGEPLDNSMVSLKSKKKKKKSKTGHITTHHTDAVLSMAHNKYFRSVLASTSADHTVKLWDLNSGNAARSLASIHSNKNVSSSEWHMLNGSILLTGGYDSRVALTDVRISDESQMSKYWSAMAGEEIETVTFASENIILCGTDSGNVYSFDIRNNENRKPVWTLKAHDAGISTLCSNKFIPGMMSTGAMGEKTVKLWKFPLDDATNTKGPSMVLSRDFDVGNVLTSSFAPDIEVAGTMVIGGVNKVLKLWDVFTNRSVRKSFKSELENVQARAKEEAQKIGKSSRIARKYTSNDNPDTVITIDDQGEDEEEREGGDEHDDMA</sequence>
<gene>
    <name type="primary">PWP1</name>
    <name type="ordered locus">YLR196W</name>
    <name type="ORF">L8167.10</name>
</gene>
<dbReference type="EMBL" id="M37578">
    <property type="protein sequence ID" value="AAA34926.1"/>
    <property type="molecule type" value="Genomic_DNA"/>
</dbReference>
<dbReference type="EMBL" id="U14913">
    <property type="protein sequence ID" value="AAB67432.1"/>
    <property type="molecule type" value="Genomic_DNA"/>
</dbReference>
<dbReference type="EMBL" id="BK006945">
    <property type="protein sequence ID" value="DAA09515.1"/>
    <property type="molecule type" value="Genomic_DNA"/>
</dbReference>
<dbReference type="PIR" id="S29367">
    <property type="entry name" value="S29367"/>
</dbReference>
<dbReference type="RefSeq" id="NP_013297.1">
    <property type="nucleotide sequence ID" value="NM_001182083.1"/>
</dbReference>
<dbReference type="SMR" id="P21304"/>
<dbReference type="BioGRID" id="31466">
    <property type="interactions" value="350"/>
</dbReference>
<dbReference type="DIP" id="DIP-4203N"/>
<dbReference type="FunCoup" id="P21304">
    <property type="interactions" value="1810"/>
</dbReference>
<dbReference type="IntAct" id="P21304">
    <property type="interactions" value="132"/>
</dbReference>
<dbReference type="MINT" id="P21304"/>
<dbReference type="STRING" id="4932.YLR196W"/>
<dbReference type="iPTMnet" id="P21304"/>
<dbReference type="PaxDb" id="4932-YLR196W"/>
<dbReference type="PeptideAtlas" id="P21304"/>
<dbReference type="EnsemblFungi" id="YLR196W_mRNA">
    <property type="protein sequence ID" value="YLR196W"/>
    <property type="gene ID" value="YLR196W"/>
</dbReference>
<dbReference type="GeneID" id="850893"/>
<dbReference type="KEGG" id="sce:YLR196W"/>
<dbReference type="AGR" id="SGD:S000004186"/>
<dbReference type="SGD" id="S000004186">
    <property type="gene designation" value="PWP1"/>
</dbReference>
<dbReference type="VEuPathDB" id="FungiDB:YLR196W"/>
<dbReference type="eggNOG" id="KOG0270">
    <property type="taxonomic scope" value="Eukaryota"/>
</dbReference>
<dbReference type="GeneTree" id="ENSGT00390000017324"/>
<dbReference type="HOGENOM" id="CLU_023867_0_1_1"/>
<dbReference type="InParanoid" id="P21304"/>
<dbReference type="OMA" id="CFVPRGV"/>
<dbReference type="OrthoDB" id="270624at2759"/>
<dbReference type="BioCyc" id="YEAST:G3O-32317-MONOMER"/>
<dbReference type="BioGRID-ORCS" id="850893">
    <property type="hits" value="0 hits in 10 CRISPR screens"/>
</dbReference>
<dbReference type="CD-CODE" id="BDAE0F88">
    <property type="entry name" value="Nucleolus"/>
</dbReference>
<dbReference type="PRO" id="PR:P21304"/>
<dbReference type="Proteomes" id="UP000002311">
    <property type="component" value="Chromosome XII"/>
</dbReference>
<dbReference type="RNAct" id="P21304">
    <property type="molecule type" value="protein"/>
</dbReference>
<dbReference type="GO" id="GO:0005737">
    <property type="term" value="C:cytoplasm"/>
    <property type="evidence" value="ECO:0007005"/>
    <property type="project" value="SGD"/>
</dbReference>
<dbReference type="GO" id="GO:0005730">
    <property type="term" value="C:nucleolus"/>
    <property type="evidence" value="ECO:0007005"/>
    <property type="project" value="SGD"/>
</dbReference>
<dbReference type="GO" id="GO:0005634">
    <property type="term" value="C:nucleus"/>
    <property type="evidence" value="ECO:0007005"/>
    <property type="project" value="SGD"/>
</dbReference>
<dbReference type="GO" id="GO:0006364">
    <property type="term" value="P:rRNA processing"/>
    <property type="evidence" value="ECO:0000315"/>
    <property type="project" value="SGD"/>
</dbReference>
<dbReference type="FunFam" id="2.130.10.10:FF:002013">
    <property type="entry name" value="rRNA-processing protein"/>
    <property type="match status" value="1"/>
</dbReference>
<dbReference type="Gene3D" id="2.130.10.10">
    <property type="entry name" value="YVTN repeat-like/Quinoprotein amine dehydrogenase"/>
    <property type="match status" value="1"/>
</dbReference>
<dbReference type="InterPro" id="IPR044285">
    <property type="entry name" value="PWP1"/>
</dbReference>
<dbReference type="InterPro" id="IPR015943">
    <property type="entry name" value="WD40/YVTN_repeat-like_dom_sf"/>
</dbReference>
<dbReference type="InterPro" id="IPR019775">
    <property type="entry name" value="WD40_repeat_CS"/>
</dbReference>
<dbReference type="InterPro" id="IPR036322">
    <property type="entry name" value="WD40_repeat_dom_sf"/>
</dbReference>
<dbReference type="InterPro" id="IPR001680">
    <property type="entry name" value="WD40_rpt"/>
</dbReference>
<dbReference type="PANTHER" id="PTHR14091">
    <property type="entry name" value="PERIODIC TRYPTOPHAN PROTEIN 1"/>
    <property type="match status" value="1"/>
</dbReference>
<dbReference type="PANTHER" id="PTHR14091:SF0">
    <property type="entry name" value="PERIODIC TRYPTOPHAN PROTEIN 1 HOMOLOG"/>
    <property type="match status" value="1"/>
</dbReference>
<dbReference type="Pfam" id="PF00400">
    <property type="entry name" value="WD40"/>
    <property type="match status" value="1"/>
</dbReference>
<dbReference type="SMART" id="SM00320">
    <property type="entry name" value="WD40"/>
    <property type="match status" value="5"/>
</dbReference>
<dbReference type="SUPFAM" id="SSF50978">
    <property type="entry name" value="WD40 repeat-like"/>
    <property type="match status" value="1"/>
</dbReference>
<dbReference type="PROSITE" id="PS00678">
    <property type="entry name" value="WD_REPEATS_1"/>
    <property type="match status" value="3"/>
</dbReference>
<dbReference type="PROSITE" id="PS50082">
    <property type="entry name" value="WD_REPEATS_2"/>
    <property type="match status" value="1"/>
</dbReference>
<dbReference type="PROSITE" id="PS50294">
    <property type="entry name" value="WD_REPEATS_REGION"/>
    <property type="match status" value="1"/>
</dbReference>
<name>PWP1_YEAST</name>